<keyword id="KW-0028">Amino-acid biosynthesis</keyword>
<keyword id="KW-0057">Aromatic amino acid biosynthesis</keyword>
<keyword id="KW-0170">Cobalt</keyword>
<keyword id="KW-0963">Cytoplasm</keyword>
<keyword id="KW-0456">Lyase</keyword>
<keyword id="KW-0479">Metal-binding</keyword>
<keyword id="KW-0520">NAD</keyword>
<keyword id="KW-0547">Nucleotide-binding</keyword>
<keyword id="KW-1185">Reference proteome</keyword>
<keyword id="KW-0862">Zinc</keyword>
<sequence length="359" mass="37896">MITVNVDLGERAYPIHIGADLIGRTELFAPHIAGASVTIVTNTTVEPLYGDTLRAALAPLGKRVSTVVLPDGEAYKNWETLNLIFDGLLEQHADRKTTLIALGGGVIGDMTGFAAACYMRGVPFIQVPTTLLSQVDSSVGGKTGINHPLGKNMIGAFYQPQAVIADIGALSTLPDRELAAGVAEIVKTGAIADAAFFDWIEANVGALTRRDPDALAHAVKRSCEIKAGVVAADEREGGLRAILNFGHTFGHAIEAGLGYGEWLHGEAVGCGMVMAADLSVRTGHLDEASRARLCRVVEAAHLPTRAPDLGDARYVELMRVDKKAEAGAIKFILLKRFGETIITPAPDDAVLATLAATTR</sequence>
<feature type="chain" id="PRO_0000231074" description="3-dehydroquinate synthase">
    <location>
        <begin position="1"/>
        <end position="359"/>
    </location>
</feature>
<feature type="binding site" evidence="1">
    <location>
        <begin position="71"/>
        <end position="76"/>
    </location>
    <ligand>
        <name>NAD(+)</name>
        <dbReference type="ChEBI" id="CHEBI:57540"/>
    </ligand>
</feature>
<feature type="binding site" evidence="1">
    <location>
        <begin position="105"/>
        <end position="109"/>
    </location>
    <ligand>
        <name>NAD(+)</name>
        <dbReference type="ChEBI" id="CHEBI:57540"/>
    </ligand>
</feature>
<feature type="binding site" evidence="1">
    <location>
        <begin position="129"/>
        <end position="130"/>
    </location>
    <ligand>
        <name>NAD(+)</name>
        <dbReference type="ChEBI" id="CHEBI:57540"/>
    </ligand>
</feature>
<feature type="binding site" evidence="1">
    <location>
        <position position="142"/>
    </location>
    <ligand>
        <name>NAD(+)</name>
        <dbReference type="ChEBI" id="CHEBI:57540"/>
    </ligand>
</feature>
<feature type="binding site" evidence="1">
    <location>
        <position position="151"/>
    </location>
    <ligand>
        <name>NAD(+)</name>
        <dbReference type="ChEBI" id="CHEBI:57540"/>
    </ligand>
</feature>
<feature type="binding site" evidence="1">
    <location>
        <position position="184"/>
    </location>
    <ligand>
        <name>Zn(2+)</name>
        <dbReference type="ChEBI" id="CHEBI:29105"/>
    </ligand>
</feature>
<feature type="binding site" evidence="1">
    <location>
        <position position="247"/>
    </location>
    <ligand>
        <name>Zn(2+)</name>
        <dbReference type="ChEBI" id="CHEBI:29105"/>
    </ligand>
</feature>
<feature type="binding site" evidence="1">
    <location>
        <position position="264"/>
    </location>
    <ligand>
        <name>Zn(2+)</name>
        <dbReference type="ChEBI" id="CHEBI:29105"/>
    </ligand>
</feature>
<reference key="1">
    <citation type="journal article" date="2004" name="Proc. Natl. Acad. Sci. U.S.A.">
        <title>Genomic plasticity of the causative agent of melioidosis, Burkholderia pseudomallei.</title>
        <authorList>
            <person name="Holden M.T.G."/>
            <person name="Titball R.W."/>
            <person name="Peacock S.J."/>
            <person name="Cerdeno-Tarraga A.-M."/>
            <person name="Atkins T."/>
            <person name="Crossman L.C."/>
            <person name="Pitt T."/>
            <person name="Churcher C."/>
            <person name="Mungall K.L."/>
            <person name="Bentley S.D."/>
            <person name="Sebaihia M."/>
            <person name="Thomson N.R."/>
            <person name="Bason N."/>
            <person name="Beacham I.R."/>
            <person name="Brooks K."/>
            <person name="Brown K.A."/>
            <person name="Brown N.F."/>
            <person name="Challis G.L."/>
            <person name="Cherevach I."/>
            <person name="Chillingworth T."/>
            <person name="Cronin A."/>
            <person name="Crossett B."/>
            <person name="Davis P."/>
            <person name="DeShazer D."/>
            <person name="Feltwell T."/>
            <person name="Fraser A."/>
            <person name="Hance Z."/>
            <person name="Hauser H."/>
            <person name="Holroyd S."/>
            <person name="Jagels K."/>
            <person name="Keith K.E."/>
            <person name="Maddison M."/>
            <person name="Moule S."/>
            <person name="Price C."/>
            <person name="Quail M.A."/>
            <person name="Rabbinowitsch E."/>
            <person name="Rutherford K."/>
            <person name="Sanders M."/>
            <person name="Simmonds M."/>
            <person name="Songsivilai S."/>
            <person name="Stevens K."/>
            <person name="Tumapa S."/>
            <person name="Vesaratchavest M."/>
            <person name="Whitehead S."/>
            <person name="Yeats C."/>
            <person name="Barrell B.G."/>
            <person name="Oyston P.C.F."/>
            <person name="Parkhill J."/>
        </authorList>
    </citation>
    <scope>NUCLEOTIDE SEQUENCE [LARGE SCALE GENOMIC DNA]</scope>
    <source>
        <strain>K96243</strain>
    </source>
</reference>
<evidence type="ECO:0000255" key="1">
    <source>
        <dbReference type="HAMAP-Rule" id="MF_00110"/>
    </source>
</evidence>
<protein>
    <recommendedName>
        <fullName evidence="1">3-dehydroquinate synthase</fullName>
        <shortName evidence="1">DHQS</shortName>
        <ecNumber evidence="1">4.2.3.4</ecNumber>
    </recommendedName>
</protein>
<proteinExistence type="inferred from homology"/>
<comment type="function">
    <text evidence="1">Catalyzes the conversion of 3-deoxy-D-arabino-heptulosonate 7-phosphate (DAHP) to dehydroquinate (DHQ).</text>
</comment>
<comment type="catalytic activity">
    <reaction evidence="1">
        <text>7-phospho-2-dehydro-3-deoxy-D-arabino-heptonate = 3-dehydroquinate + phosphate</text>
        <dbReference type="Rhea" id="RHEA:21968"/>
        <dbReference type="ChEBI" id="CHEBI:32364"/>
        <dbReference type="ChEBI" id="CHEBI:43474"/>
        <dbReference type="ChEBI" id="CHEBI:58394"/>
        <dbReference type="EC" id="4.2.3.4"/>
    </reaction>
</comment>
<comment type="cofactor">
    <cofactor evidence="1">
        <name>Co(2+)</name>
        <dbReference type="ChEBI" id="CHEBI:48828"/>
    </cofactor>
    <cofactor evidence="1">
        <name>Zn(2+)</name>
        <dbReference type="ChEBI" id="CHEBI:29105"/>
    </cofactor>
    <text evidence="1">Binds 1 divalent metal cation per subunit. Can use either Co(2+) or Zn(2+).</text>
</comment>
<comment type="cofactor">
    <cofactor evidence="1">
        <name>NAD(+)</name>
        <dbReference type="ChEBI" id="CHEBI:57540"/>
    </cofactor>
</comment>
<comment type="pathway">
    <text evidence="1">Metabolic intermediate biosynthesis; chorismate biosynthesis; chorismate from D-erythrose 4-phosphate and phosphoenolpyruvate: step 2/7.</text>
</comment>
<comment type="subcellular location">
    <subcellularLocation>
        <location evidence="1">Cytoplasm</location>
    </subcellularLocation>
</comment>
<comment type="similarity">
    <text evidence="1">Belongs to the sugar phosphate cyclases superfamily. Dehydroquinate synthase family.</text>
</comment>
<organism>
    <name type="scientific">Burkholderia pseudomallei (strain K96243)</name>
    <dbReference type="NCBI Taxonomy" id="272560"/>
    <lineage>
        <taxon>Bacteria</taxon>
        <taxon>Pseudomonadati</taxon>
        <taxon>Pseudomonadota</taxon>
        <taxon>Betaproteobacteria</taxon>
        <taxon>Burkholderiales</taxon>
        <taxon>Burkholderiaceae</taxon>
        <taxon>Burkholderia</taxon>
        <taxon>pseudomallei group</taxon>
    </lineage>
</organism>
<accession>Q63Q57</accession>
<dbReference type="EC" id="4.2.3.4" evidence="1"/>
<dbReference type="EMBL" id="BX571965">
    <property type="protein sequence ID" value="CAH37178.1"/>
    <property type="molecule type" value="Genomic_DNA"/>
</dbReference>
<dbReference type="RefSeq" id="WP_004196751.1">
    <property type="nucleotide sequence ID" value="NZ_CP009538.1"/>
</dbReference>
<dbReference type="RefSeq" id="YP_109761.1">
    <property type="nucleotide sequence ID" value="NC_006350.1"/>
</dbReference>
<dbReference type="SMR" id="Q63Q57"/>
<dbReference type="STRING" id="272560.BPSL3168"/>
<dbReference type="GeneID" id="92980425"/>
<dbReference type="KEGG" id="bps:BPSL3168"/>
<dbReference type="PATRIC" id="fig|272560.51.peg.2071"/>
<dbReference type="eggNOG" id="COG0337">
    <property type="taxonomic scope" value="Bacteria"/>
</dbReference>
<dbReference type="UniPathway" id="UPA00053">
    <property type="reaction ID" value="UER00085"/>
</dbReference>
<dbReference type="Proteomes" id="UP000000605">
    <property type="component" value="Chromosome 1"/>
</dbReference>
<dbReference type="GO" id="GO:0005737">
    <property type="term" value="C:cytoplasm"/>
    <property type="evidence" value="ECO:0007669"/>
    <property type="project" value="UniProtKB-SubCell"/>
</dbReference>
<dbReference type="GO" id="GO:0003856">
    <property type="term" value="F:3-dehydroquinate synthase activity"/>
    <property type="evidence" value="ECO:0007669"/>
    <property type="project" value="UniProtKB-UniRule"/>
</dbReference>
<dbReference type="GO" id="GO:0046872">
    <property type="term" value="F:metal ion binding"/>
    <property type="evidence" value="ECO:0007669"/>
    <property type="project" value="UniProtKB-KW"/>
</dbReference>
<dbReference type="GO" id="GO:0000166">
    <property type="term" value="F:nucleotide binding"/>
    <property type="evidence" value="ECO:0007669"/>
    <property type="project" value="UniProtKB-KW"/>
</dbReference>
<dbReference type="GO" id="GO:0008652">
    <property type="term" value="P:amino acid biosynthetic process"/>
    <property type="evidence" value="ECO:0007669"/>
    <property type="project" value="UniProtKB-KW"/>
</dbReference>
<dbReference type="GO" id="GO:0009073">
    <property type="term" value="P:aromatic amino acid family biosynthetic process"/>
    <property type="evidence" value="ECO:0007669"/>
    <property type="project" value="UniProtKB-KW"/>
</dbReference>
<dbReference type="GO" id="GO:0009423">
    <property type="term" value="P:chorismate biosynthetic process"/>
    <property type="evidence" value="ECO:0007669"/>
    <property type="project" value="UniProtKB-UniRule"/>
</dbReference>
<dbReference type="CDD" id="cd08195">
    <property type="entry name" value="DHQS"/>
    <property type="match status" value="1"/>
</dbReference>
<dbReference type="FunFam" id="3.40.50.1970:FF:000001">
    <property type="entry name" value="3-dehydroquinate synthase"/>
    <property type="match status" value="1"/>
</dbReference>
<dbReference type="Gene3D" id="3.40.50.1970">
    <property type="match status" value="1"/>
</dbReference>
<dbReference type="Gene3D" id="1.20.1090.10">
    <property type="entry name" value="Dehydroquinate synthase-like - alpha domain"/>
    <property type="match status" value="1"/>
</dbReference>
<dbReference type="HAMAP" id="MF_00110">
    <property type="entry name" value="DHQ_synthase"/>
    <property type="match status" value="1"/>
</dbReference>
<dbReference type="InterPro" id="IPR050071">
    <property type="entry name" value="Dehydroquinate_synthase"/>
</dbReference>
<dbReference type="InterPro" id="IPR016037">
    <property type="entry name" value="DHQ_synth_AroB"/>
</dbReference>
<dbReference type="InterPro" id="IPR030963">
    <property type="entry name" value="DHQ_synth_fam"/>
</dbReference>
<dbReference type="InterPro" id="IPR030960">
    <property type="entry name" value="DHQS/DOIS_N"/>
</dbReference>
<dbReference type="InterPro" id="IPR056179">
    <property type="entry name" value="DHQS_C"/>
</dbReference>
<dbReference type="NCBIfam" id="TIGR01357">
    <property type="entry name" value="aroB"/>
    <property type="match status" value="1"/>
</dbReference>
<dbReference type="PANTHER" id="PTHR43622">
    <property type="entry name" value="3-DEHYDROQUINATE SYNTHASE"/>
    <property type="match status" value="1"/>
</dbReference>
<dbReference type="PANTHER" id="PTHR43622:SF7">
    <property type="entry name" value="3-DEHYDROQUINATE SYNTHASE, CHLOROPLASTIC"/>
    <property type="match status" value="1"/>
</dbReference>
<dbReference type="Pfam" id="PF01761">
    <property type="entry name" value="DHQ_synthase"/>
    <property type="match status" value="1"/>
</dbReference>
<dbReference type="Pfam" id="PF24621">
    <property type="entry name" value="DHQS_C"/>
    <property type="match status" value="1"/>
</dbReference>
<dbReference type="PIRSF" id="PIRSF001455">
    <property type="entry name" value="DHQ_synth"/>
    <property type="match status" value="1"/>
</dbReference>
<dbReference type="SUPFAM" id="SSF56796">
    <property type="entry name" value="Dehydroquinate synthase-like"/>
    <property type="match status" value="1"/>
</dbReference>
<name>AROB_BURPS</name>
<gene>
    <name evidence="1" type="primary">aroB</name>
    <name type="ordered locus">BPSL3168</name>
</gene>